<keyword id="KW-0963">Cytoplasm</keyword>
<keyword id="KW-1185">Reference proteome</keyword>
<keyword id="KW-0690">Ribosome biogenesis</keyword>
<name>RBFA_LACE2</name>
<evidence type="ECO:0000255" key="1">
    <source>
        <dbReference type="HAMAP-Rule" id="MF_00003"/>
    </source>
</evidence>
<reference key="1">
    <citation type="journal article" date="2009" name="Proc. Natl. Acad. Sci. U.S.A.">
        <title>Characterizing a model human gut microbiota composed of members of its two dominant bacterial phyla.</title>
        <authorList>
            <person name="Mahowald M.A."/>
            <person name="Rey F.E."/>
            <person name="Seedorf H."/>
            <person name="Turnbaugh P.J."/>
            <person name="Fulton R.S."/>
            <person name="Wollam A."/>
            <person name="Shah N."/>
            <person name="Wang C."/>
            <person name="Magrini V."/>
            <person name="Wilson R.K."/>
            <person name="Cantarel B.L."/>
            <person name="Coutinho P.M."/>
            <person name="Henrissat B."/>
            <person name="Crock L.W."/>
            <person name="Russell A."/>
            <person name="Verberkmoes N.C."/>
            <person name="Hettich R.L."/>
            <person name="Gordon J.I."/>
        </authorList>
    </citation>
    <scope>NUCLEOTIDE SEQUENCE [LARGE SCALE GENOMIC DNA]</scope>
    <source>
        <strain>ATCC 27750 / DSM 3376 / VPI C15-48 / C15-B4</strain>
    </source>
</reference>
<accession>C4Z5N8</accession>
<dbReference type="EMBL" id="CP001104">
    <property type="protein sequence ID" value="ACR71897.1"/>
    <property type="molecule type" value="Genomic_DNA"/>
</dbReference>
<dbReference type="RefSeq" id="WP_012739133.1">
    <property type="nucleotide sequence ID" value="NC_012778.1"/>
</dbReference>
<dbReference type="SMR" id="C4Z5N8"/>
<dbReference type="STRING" id="515620.EUBELI_00895"/>
<dbReference type="GeneID" id="41355630"/>
<dbReference type="KEGG" id="eel:EUBELI_00895"/>
<dbReference type="eggNOG" id="COG0858">
    <property type="taxonomic scope" value="Bacteria"/>
</dbReference>
<dbReference type="HOGENOM" id="CLU_089475_6_3_9"/>
<dbReference type="Proteomes" id="UP000001476">
    <property type="component" value="Chromosome"/>
</dbReference>
<dbReference type="GO" id="GO:0005829">
    <property type="term" value="C:cytosol"/>
    <property type="evidence" value="ECO:0007669"/>
    <property type="project" value="TreeGrafter"/>
</dbReference>
<dbReference type="GO" id="GO:0043024">
    <property type="term" value="F:ribosomal small subunit binding"/>
    <property type="evidence" value="ECO:0007669"/>
    <property type="project" value="TreeGrafter"/>
</dbReference>
<dbReference type="GO" id="GO:0030490">
    <property type="term" value="P:maturation of SSU-rRNA"/>
    <property type="evidence" value="ECO:0007669"/>
    <property type="project" value="UniProtKB-UniRule"/>
</dbReference>
<dbReference type="Gene3D" id="3.30.300.20">
    <property type="match status" value="1"/>
</dbReference>
<dbReference type="HAMAP" id="MF_00003">
    <property type="entry name" value="RbfA"/>
    <property type="match status" value="1"/>
</dbReference>
<dbReference type="InterPro" id="IPR015946">
    <property type="entry name" value="KH_dom-like_a/b"/>
</dbReference>
<dbReference type="InterPro" id="IPR000238">
    <property type="entry name" value="RbfA"/>
</dbReference>
<dbReference type="InterPro" id="IPR023799">
    <property type="entry name" value="RbfA_dom_sf"/>
</dbReference>
<dbReference type="InterPro" id="IPR020053">
    <property type="entry name" value="Ribosome-bd_factorA_CS"/>
</dbReference>
<dbReference type="NCBIfam" id="TIGR00082">
    <property type="entry name" value="rbfA"/>
    <property type="match status" value="1"/>
</dbReference>
<dbReference type="PANTHER" id="PTHR33515">
    <property type="entry name" value="RIBOSOME-BINDING FACTOR A, CHLOROPLASTIC-RELATED"/>
    <property type="match status" value="1"/>
</dbReference>
<dbReference type="PANTHER" id="PTHR33515:SF1">
    <property type="entry name" value="RIBOSOME-BINDING FACTOR A, CHLOROPLASTIC-RELATED"/>
    <property type="match status" value="1"/>
</dbReference>
<dbReference type="Pfam" id="PF02033">
    <property type="entry name" value="RBFA"/>
    <property type="match status" value="1"/>
</dbReference>
<dbReference type="SUPFAM" id="SSF89919">
    <property type="entry name" value="Ribosome-binding factor A, RbfA"/>
    <property type="match status" value="1"/>
</dbReference>
<dbReference type="PROSITE" id="PS01319">
    <property type="entry name" value="RBFA"/>
    <property type="match status" value="1"/>
</dbReference>
<feature type="chain" id="PRO_1000201630" description="Ribosome-binding factor A">
    <location>
        <begin position="1"/>
        <end position="130"/>
    </location>
</feature>
<organism>
    <name type="scientific">Lachnospira eligens (strain ATCC 27750 / DSM 3376 / VPI C15-48 / C15-B4)</name>
    <name type="common">Eubacterium eligens</name>
    <dbReference type="NCBI Taxonomy" id="515620"/>
    <lineage>
        <taxon>Bacteria</taxon>
        <taxon>Bacillati</taxon>
        <taxon>Bacillota</taxon>
        <taxon>Clostridia</taxon>
        <taxon>Lachnospirales</taxon>
        <taxon>Lachnospiraceae</taxon>
        <taxon>Lachnospira</taxon>
    </lineage>
</organism>
<comment type="function">
    <text evidence="1">One of several proteins that assist in the late maturation steps of the functional core of the 30S ribosomal subunit. Associates with free 30S ribosomal subunits (but not with 30S subunits that are part of 70S ribosomes or polysomes). Required for efficient processing of 16S rRNA. May interact with the 5'-terminal helix region of 16S rRNA.</text>
</comment>
<comment type="subunit">
    <text evidence="1">Monomer. Binds 30S ribosomal subunits, but not 50S ribosomal subunits or 70S ribosomes.</text>
</comment>
<comment type="subcellular location">
    <subcellularLocation>
        <location evidence="1">Cytoplasm</location>
    </subcellularLocation>
</comment>
<comment type="similarity">
    <text evidence="1">Belongs to the RbfA family.</text>
</comment>
<protein>
    <recommendedName>
        <fullName evidence="1">Ribosome-binding factor A</fullName>
    </recommendedName>
</protein>
<sequence>MRKNSVKNTRINGEVLKELSNIIRSEIKDPRINPMTSVVAVEVAPDLKTCKAYISVLGDEKSQKDTITGLKSAEGYIRRQLARTVNLRNTPEIRFILDQSIEYGINMSKLIDEVTEHDNKMHVEVEDETE</sequence>
<gene>
    <name evidence="1" type="primary">rbfA</name>
    <name type="ordered locus">EUBELI_00895</name>
</gene>
<proteinExistence type="inferred from homology"/>